<feature type="chain" id="PRO_0000390937" description="Ikaros family zinc finger protein">
    <location>
        <begin position="1"/>
        <end position="562"/>
    </location>
</feature>
<feature type="zinc finger region" description="C2H2-type 1" evidence="3">
    <location>
        <begin position="45"/>
        <end position="67"/>
    </location>
</feature>
<feature type="zinc finger region" description="C2H2-type 2" evidence="3">
    <location>
        <begin position="73"/>
        <end position="95"/>
    </location>
</feature>
<feature type="zinc finger region" description="C2H2-type 3" evidence="3">
    <location>
        <begin position="101"/>
        <end position="123"/>
    </location>
</feature>
<feature type="zinc finger region" description="C2H2-type 4; degenerate" evidence="3">
    <location>
        <begin position="129"/>
        <end position="152"/>
    </location>
</feature>
<feature type="zinc finger region" description="C2H2-type 5" evidence="3">
    <location>
        <begin position="494"/>
        <end position="516"/>
    </location>
</feature>
<feature type="zinc finger region" description="C2H2-type 6" evidence="3">
    <location>
        <begin position="522"/>
        <end position="546"/>
    </location>
</feature>
<feature type="region of interest" description="Disordered" evidence="4">
    <location>
        <begin position="178"/>
        <end position="210"/>
    </location>
</feature>
<feature type="region of interest" description="Disordered" evidence="4">
    <location>
        <begin position="293"/>
        <end position="342"/>
    </location>
</feature>
<feature type="region of interest" description="Disordered" evidence="4">
    <location>
        <begin position="361"/>
        <end position="404"/>
    </location>
</feature>
<feature type="region of interest" description="Disordered" evidence="4">
    <location>
        <begin position="451"/>
        <end position="473"/>
    </location>
</feature>
<feature type="compositionally biased region" description="Low complexity" evidence="4">
    <location>
        <begin position="307"/>
        <end position="326"/>
    </location>
</feature>
<feature type="compositionally biased region" description="Polar residues" evidence="4">
    <location>
        <begin position="327"/>
        <end position="336"/>
    </location>
</feature>
<feature type="compositionally biased region" description="Basic and acidic residues" evidence="4">
    <location>
        <begin position="369"/>
        <end position="383"/>
    </location>
</feature>
<feature type="compositionally biased region" description="Polar residues" evidence="4">
    <location>
        <begin position="456"/>
        <end position="471"/>
    </location>
</feature>
<feature type="sequence conflict" description="In Ref. 2; AAL56415." evidence="7" ref="2">
    <original>L</original>
    <variation>P</variation>
    <location>
        <position position="396"/>
    </location>
</feature>
<comment type="subcellular location">
    <subcellularLocation>
        <location evidence="1">Nucleus</location>
    </subcellularLocation>
</comment>
<comment type="tissue specificity">
    <text evidence="5">Expression is strongest in the anterior Fol cells of the oikoplastic epithelium.</text>
</comment>
<comment type="developmental stage">
    <text evidence="5">Very weak expression observed in the oocyte. Strongest expression seen in early tadpole (2 hours posthatching) and at 4/5 days posthatching.</text>
</comment>
<comment type="domain">
    <text evidence="5">N-terminal zinc-finger domains are similar to the Ikaros clan but may not have the same binding specificity. Key residues involved in binding to the consensus Ikaros target site (5'-GGGA-3'), found in the promoter regions have diverged.</text>
</comment>
<comment type="similarity">
    <text evidence="2">Belongs to the Ikaros C2H2-type zinc-finger protein family.</text>
</comment>
<comment type="sequence caution" evidence="7">
    <conflict type="erroneous gene model prediction">
        <sequence resource="EMBL-CDS" id="AAL56415"/>
    </conflict>
</comment>
<protein>
    <recommendedName>
        <fullName>Ikaros family zinc finger protein</fullName>
    </recommendedName>
    <alternativeName>
        <fullName evidence="10">Ikaros-like transcription factor</fullName>
        <shortName evidence="6">OIL</shortName>
    </alternativeName>
</protein>
<evidence type="ECO:0000250" key="1">
    <source>
        <dbReference type="UniProtKB" id="Q9H2S9"/>
    </source>
</evidence>
<evidence type="ECO:0000255" key="2"/>
<evidence type="ECO:0000255" key="3">
    <source>
        <dbReference type="PROSITE-ProRule" id="PRU00042"/>
    </source>
</evidence>
<evidence type="ECO:0000256" key="4">
    <source>
        <dbReference type="SAM" id="MobiDB-lite"/>
    </source>
</evidence>
<evidence type="ECO:0000269" key="5">
    <source>
    </source>
</evidence>
<evidence type="ECO:0000303" key="6">
    <source>
    </source>
</evidence>
<evidence type="ECO:0000305" key="7"/>
<evidence type="ECO:0000312" key="8">
    <source>
        <dbReference type="EMBL" id="AAL56415.1"/>
    </source>
</evidence>
<evidence type="ECO:0000312" key="9">
    <source>
        <dbReference type="EMBL" id="AAP84655.1"/>
    </source>
</evidence>
<evidence type="ECO:0000312" key="10">
    <source>
        <dbReference type="EMBL" id="AAP84656.1"/>
    </source>
</evidence>
<keyword id="KW-0238">DNA-binding</keyword>
<keyword id="KW-0479">Metal-binding</keyword>
<keyword id="KW-0539">Nucleus</keyword>
<keyword id="KW-0677">Repeat</keyword>
<keyword id="KW-0804">Transcription</keyword>
<keyword id="KW-0805">Transcription regulation</keyword>
<keyword id="KW-0862">Zinc</keyword>
<keyword id="KW-0863">Zinc-finger</keyword>
<accession>Q6XDT4</accession>
<accession>Q8WS46</accession>
<proteinExistence type="evidence at transcript level"/>
<dbReference type="EMBL" id="AY237106">
    <property type="protein sequence ID" value="AAP84655.1"/>
    <property type="molecule type" value="mRNA"/>
</dbReference>
<dbReference type="EMBL" id="AY237107">
    <property type="protein sequence ID" value="AAP84656.1"/>
    <property type="molecule type" value="Genomic_DNA"/>
</dbReference>
<dbReference type="EMBL" id="AF374374">
    <property type="protein sequence ID" value="AAL56415.1"/>
    <property type="status" value="ALT_SEQ"/>
    <property type="molecule type" value="Genomic_DNA"/>
</dbReference>
<dbReference type="SMR" id="Q6XDT4"/>
<dbReference type="OrthoDB" id="9439903at2759"/>
<dbReference type="GO" id="GO:0005634">
    <property type="term" value="C:nucleus"/>
    <property type="evidence" value="ECO:0007669"/>
    <property type="project" value="UniProtKB-SubCell"/>
</dbReference>
<dbReference type="GO" id="GO:0000981">
    <property type="term" value="F:DNA-binding transcription factor activity, RNA polymerase II-specific"/>
    <property type="evidence" value="ECO:0007669"/>
    <property type="project" value="TreeGrafter"/>
</dbReference>
<dbReference type="GO" id="GO:0000977">
    <property type="term" value="F:RNA polymerase II transcription regulatory region sequence-specific DNA binding"/>
    <property type="evidence" value="ECO:0007669"/>
    <property type="project" value="TreeGrafter"/>
</dbReference>
<dbReference type="GO" id="GO:0008270">
    <property type="term" value="F:zinc ion binding"/>
    <property type="evidence" value="ECO:0007669"/>
    <property type="project" value="UniProtKB-KW"/>
</dbReference>
<dbReference type="FunFam" id="3.30.160.60:FF:000130">
    <property type="entry name" value="Spalt-like transcription factor 4"/>
    <property type="match status" value="1"/>
</dbReference>
<dbReference type="FunFam" id="3.30.160.60:FF:000123">
    <property type="entry name" value="transcriptional repressor CTCF isoform X1"/>
    <property type="match status" value="1"/>
</dbReference>
<dbReference type="Gene3D" id="3.30.160.60">
    <property type="entry name" value="Classic Zinc Finger"/>
    <property type="match status" value="5"/>
</dbReference>
<dbReference type="InterPro" id="IPR036236">
    <property type="entry name" value="Znf_C2H2_sf"/>
</dbReference>
<dbReference type="InterPro" id="IPR013087">
    <property type="entry name" value="Znf_C2H2_type"/>
</dbReference>
<dbReference type="PANTHER" id="PTHR24381:SF393">
    <property type="entry name" value="CHROMATIN-LINKED ADAPTOR FOR MSL PROTEINS, ISOFORM B"/>
    <property type="match status" value="1"/>
</dbReference>
<dbReference type="PANTHER" id="PTHR24381">
    <property type="entry name" value="ZINC FINGER PROTEIN"/>
    <property type="match status" value="1"/>
</dbReference>
<dbReference type="Pfam" id="PF00096">
    <property type="entry name" value="zf-C2H2"/>
    <property type="match status" value="3"/>
</dbReference>
<dbReference type="SMART" id="SM00355">
    <property type="entry name" value="ZnF_C2H2"/>
    <property type="match status" value="6"/>
</dbReference>
<dbReference type="SUPFAM" id="SSF57667">
    <property type="entry name" value="beta-beta-alpha zinc fingers"/>
    <property type="match status" value="3"/>
</dbReference>
<dbReference type="PROSITE" id="PS00028">
    <property type="entry name" value="ZINC_FINGER_C2H2_1"/>
    <property type="match status" value="5"/>
</dbReference>
<dbReference type="PROSITE" id="PS50157">
    <property type="entry name" value="ZINC_FINGER_C2H2_2"/>
    <property type="match status" value="4"/>
</dbReference>
<reference evidence="7 9" key="1">
    <citation type="journal article" date="2003" name="J. Immunol.">
        <title>Ikaros family members from the agnathan Myxine glutinosa and the urochordate Oikopleura dioica: emergence of an essential transcription factor for adaptive immunity.</title>
        <authorList>
            <person name="Cupit P.M."/>
            <person name="Hansen J.D."/>
            <person name="McCarty A.S."/>
            <person name="White G."/>
            <person name="Chioda M."/>
            <person name="Spada F."/>
            <person name="Smale S.T."/>
            <person name="Cunningham C."/>
        </authorList>
    </citation>
    <scope>NUCLEOTIDE SEQUENCE [GENOMIC DNA / MRNA]</scope>
    <scope>TISSUE SPECIFICITY</scope>
    <scope>DEVELOPMENTAL STAGE</scope>
    <scope>DOMAIN</scope>
</reference>
<reference evidence="7 8" key="2">
    <citation type="journal article" date="2001" name="Science">
        <title>Miniature genome in the marine chordate Oikopleura dioica.</title>
        <authorList>
            <person name="Seo H.C."/>
            <person name="Kube M."/>
            <person name="Edvardsen R.B."/>
            <person name="Jensen M.F."/>
            <person name="Beck A."/>
            <person name="Spriet E."/>
            <person name="Gorsky G."/>
            <person name="Thompson E.M."/>
            <person name="Lehrach R."/>
            <person name="Reinhardt H."/>
            <person name="Chourrout D."/>
        </authorList>
    </citation>
    <scope>NUCLEOTIDE SEQUENCE [GENOMIC DNA] OF 124-562</scope>
</reference>
<reference key="3">
    <citation type="journal article" date="2002" name="Science">
        <authorList>
            <person name="Seo H.C."/>
            <person name="Kube M."/>
            <person name="Edvardsen R.B."/>
            <person name="Jensen M.F."/>
            <person name="Beck A."/>
            <person name="Spriet E."/>
            <person name="Gorsky G."/>
            <person name="Thompson E.M."/>
            <person name="Lehrach R."/>
            <person name="Reinhardt H."/>
            <person name="Chourrout D."/>
        </authorList>
    </citation>
    <scope>ERRATUM OF PUBMED:11752568</scope>
</reference>
<organism>
    <name type="scientific">Oikopleura dioica</name>
    <name type="common">Tunicate</name>
    <dbReference type="NCBI Taxonomy" id="34765"/>
    <lineage>
        <taxon>Eukaryota</taxon>
        <taxon>Metazoa</taxon>
        <taxon>Chordata</taxon>
        <taxon>Tunicata</taxon>
        <taxon>Appendicularia</taxon>
        <taxon>Copelata</taxon>
        <taxon>Oikopleuridae</taxon>
        <taxon>Oikopleura</taxon>
    </lineage>
</organism>
<name>IKZF_OIKDI</name>
<sequence>MSENGSVDEIKVEEFNNEAGQTVESGELSEDNELNRKTGRNLNLIKCEECGLICAGQSHYNVHIRSHTGERPFKCHICGVAFTQKGNLRRHYKIHSDEKPFQCPICSYRCRRRDALNGHMRIHSDMRPYRCSYCARSYKSRQSMKEHEYQCPYKSDPVQPTPPGSEGFPFQNEAVMRNPLALPGPRPSTSQPAPVLSQLGQLGARPPPYPPANINELLALRARLMAPGAQHAPPPPQIRPGLPGFFGNAIPQMPPTTLQQPFNAESHRSAVGMGGTHALALHIRRLLANAVQQNQQPGGLRNSLEKPSLSEATPSSHSSHSSAEDSGQVNKFSPTESKVKPTDINQNVAKILANMVQPHPQLEDVPLPDSRKRPHSFESEPTPKRMRSPNPTNLNLDDSHKEDDVITSESPLEITNERKTFFPHVDAAERTVEAIEDNDEDDVDISVEQLDESKNEISSVDSRSPLDQSSTQDDRMEIKAQISVFKNGAKLNSWECKTCNCIFLNEITYRIHMGVHMHSDPLVCNSCGKRCSDQQEFQAHLVHHQHVSKTVVTAPPKATNVV</sequence>